<reference key="1">
    <citation type="journal article" date="2001" name="Genomics">
        <title>Cloning and characterization of three novel genes, ALS2CR1, ALS2CR2, and ALS2CR3, in the juvenile amyotrophic lateral sclerosis (ALS2) critical region at chromosome 2q33-q34: candidate genes for ALS2.</title>
        <authorList>
            <person name="Hadano S."/>
            <person name="Yanagisawa Y."/>
            <person name="Skaug J."/>
            <person name="Fichter K."/>
            <person name="Nasir J."/>
            <person name="Martindale D."/>
            <person name="Koop B.F."/>
            <person name="Scherer S.W."/>
            <person name="Nicholson D.W."/>
            <person name="Rouleau G.A."/>
            <person name="Ikeda J.-E."/>
            <person name="Hayden M.R."/>
        </authorList>
    </citation>
    <scope>NUCLEOTIDE SEQUENCE [MRNA] (ISOFORM 1)</scope>
    <scope>VARIANTS ILE-142 AND ILE-528</scope>
</reference>
<reference key="2">
    <citation type="journal article" date="2004" name="Nat. Genet.">
        <title>Complete sequencing and characterization of 21,243 full-length human cDNAs.</title>
        <authorList>
            <person name="Ota T."/>
            <person name="Suzuki Y."/>
            <person name="Nishikawa T."/>
            <person name="Otsuki T."/>
            <person name="Sugiyama T."/>
            <person name="Irie R."/>
            <person name="Wakamatsu A."/>
            <person name="Hayashi K."/>
            <person name="Sato H."/>
            <person name="Nagai K."/>
            <person name="Kimura K."/>
            <person name="Makita H."/>
            <person name="Sekine M."/>
            <person name="Obayashi M."/>
            <person name="Nishi T."/>
            <person name="Shibahara T."/>
            <person name="Tanaka T."/>
            <person name="Ishii S."/>
            <person name="Yamamoto J."/>
            <person name="Saito K."/>
            <person name="Kawai Y."/>
            <person name="Isono Y."/>
            <person name="Nakamura Y."/>
            <person name="Nagahari K."/>
            <person name="Murakami K."/>
            <person name="Yasuda T."/>
            <person name="Iwayanagi T."/>
            <person name="Wagatsuma M."/>
            <person name="Shiratori A."/>
            <person name="Sudo H."/>
            <person name="Hosoiri T."/>
            <person name="Kaku Y."/>
            <person name="Kodaira H."/>
            <person name="Kondo H."/>
            <person name="Sugawara M."/>
            <person name="Takahashi M."/>
            <person name="Kanda K."/>
            <person name="Yokoi T."/>
            <person name="Furuya T."/>
            <person name="Kikkawa E."/>
            <person name="Omura Y."/>
            <person name="Abe K."/>
            <person name="Kamihara K."/>
            <person name="Katsuta N."/>
            <person name="Sato K."/>
            <person name="Tanikawa M."/>
            <person name="Yamazaki M."/>
            <person name="Ninomiya K."/>
            <person name="Ishibashi T."/>
            <person name="Yamashita H."/>
            <person name="Murakawa K."/>
            <person name="Fujimori K."/>
            <person name="Tanai H."/>
            <person name="Kimata M."/>
            <person name="Watanabe M."/>
            <person name="Hiraoka S."/>
            <person name="Chiba Y."/>
            <person name="Ishida S."/>
            <person name="Ono Y."/>
            <person name="Takiguchi S."/>
            <person name="Watanabe S."/>
            <person name="Yosida M."/>
            <person name="Hotuta T."/>
            <person name="Kusano J."/>
            <person name="Kanehori K."/>
            <person name="Takahashi-Fujii A."/>
            <person name="Hara H."/>
            <person name="Tanase T.-O."/>
            <person name="Nomura Y."/>
            <person name="Togiya S."/>
            <person name="Komai F."/>
            <person name="Hara R."/>
            <person name="Takeuchi K."/>
            <person name="Arita M."/>
            <person name="Imose N."/>
            <person name="Musashino K."/>
            <person name="Yuuki H."/>
            <person name="Oshima A."/>
            <person name="Sasaki N."/>
            <person name="Aotsuka S."/>
            <person name="Yoshikawa Y."/>
            <person name="Matsunawa H."/>
            <person name="Ichihara T."/>
            <person name="Shiohata N."/>
            <person name="Sano S."/>
            <person name="Moriya S."/>
            <person name="Momiyama H."/>
            <person name="Satoh N."/>
            <person name="Takami S."/>
            <person name="Terashima Y."/>
            <person name="Suzuki O."/>
            <person name="Nakagawa S."/>
            <person name="Senoh A."/>
            <person name="Mizoguchi H."/>
            <person name="Goto Y."/>
            <person name="Shimizu F."/>
            <person name="Wakebe H."/>
            <person name="Hishigaki H."/>
            <person name="Watanabe T."/>
            <person name="Sugiyama A."/>
            <person name="Takemoto M."/>
            <person name="Kawakami B."/>
            <person name="Yamazaki M."/>
            <person name="Watanabe K."/>
            <person name="Kumagai A."/>
            <person name="Itakura S."/>
            <person name="Fukuzumi Y."/>
            <person name="Fujimori Y."/>
            <person name="Komiyama M."/>
            <person name="Tashiro H."/>
            <person name="Tanigami A."/>
            <person name="Fujiwara T."/>
            <person name="Ono T."/>
            <person name="Yamada K."/>
            <person name="Fujii Y."/>
            <person name="Ozaki K."/>
            <person name="Hirao M."/>
            <person name="Ohmori Y."/>
            <person name="Kawabata A."/>
            <person name="Hikiji T."/>
            <person name="Kobatake N."/>
            <person name="Inagaki H."/>
            <person name="Ikema Y."/>
            <person name="Okamoto S."/>
            <person name="Okitani R."/>
            <person name="Kawakami T."/>
            <person name="Noguchi S."/>
            <person name="Itoh T."/>
            <person name="Shigeta K."/>
            <person name="Senba T."/>
            <person name="Matsumura K."/>
            <person name="Nakajima Y."/>
            <person name="Mizuno T."/>
            <person name="Morinaga M."/>
            <person name="Sasaki M."/>
            <person name="Togashi T."/>
            <person name="Oyama M."/>
            <person name="Hata H."/>
            <person name="Watanabe M."/>
            <person name="Komatsu T."/>
            <person name="Mizushima-Sugano J."/>
            <person name="Satoh T."/>
            <person name="Shirai Y."/>
            <person name="Takahashi Y."/>
            <person name="Nakagawa K."/>
            <person name="Okumura K."/>
            <person name="Nagase T."/>
            <person name="Nomura N."/>
            <person name="Kikuchi H."/>
            <person name="Masuho Y."/>
            <person name="Yamashita R."/>
            <person name="Nakai K."/>
            <person name="Yada T."/>
            <person name="Nakamura Y."/>
            <person name="Ohara O."/>
            <person name="Isogai T."/>
            <person name="Sugano S."/>
        </authorList>
    </citation>
    <scope>NUCLEOTIDE SEQUENCE [LARGE SCALE MRNA] (ISOFORM 2)</scope>
    <scope>VARIANT ILE-142</scope>
    <source>
        <tissue>Cerebellum</tissue>
    </source>
</reference>
<reference key="3">
    <citation type="journal article" date="2005" name="Nature">
        <title>Generation and annotation of the DNA sequences of human chromosomes 2 and 4.</title>
        <authorList>
            <person name="Hillier L.W."/>
            <person name="Graves T.A."/>
            <person name="Fulton R.S."/>
            <person name="Fulton L.A."/>
            <person name="Pepin K.H."/>
            <person name="Minx P."/>
            <person name="Wagner-McPherson C."/>
            <person name="Layman D."/>
            <person name="Wylie K."/>
            <person name="Sekhon M."/>
            <person name="Becker M.C."/>
            <person name="Fewell G.A."/>
            <person name="Delehaunty K.D."/>
            <person name="Miner T.L."/>
            <person name="Nash W.E."/>
            <person name="Kremitzki C."/>
            <person name="Oddy L."/>
            <person name="Du H."/>
            <person name="Sun H."/>
            <person name="Bradshaw-Cordum H."/>
            <person name="Ali J."/>
            <person name="Carter J."/>
            <person name="Cordes M."/>
            <person name="Harris A."/>
            <person name="Isak A."/>
            <person name="van Brunt A."/>
            <person name="Nguyen C."/>
            <person name="Du F."/>
            <person name="Courtney L."/>
            <person name="Kalicki J."/>
            <person name="Ozersky P."/>
            <person name="Abbott S."/>
            <person name="Armstrong J."/>
            <person name="Belter E.A."/>
            <person name="Caruso L."/>
            <person name="Cedroni M."/>
            <person name="Cotton M."/>
            <person name="Davidson T."/>
            <person name="Desai A."/>
            <person name="Elliott G."/>
            <person name="Erb T."/>
            <person name="Fronick C."/>
            <person name="Gaige T."/>
            <person name="Haakenson W."/>
            <person name="Haglund K."/>
            <person name="Holmes A."/>
            <person name="Harkins R."/>
            <person name="Kim K."/>
            <person name="Kruchowski S.S."/>
            <person name="Strong C.M."/>
            <person name="Grewal N."/>
            <person name="Goyea E."/>
            <person name="Hou S."/>
            <person name="Levy A."/>
            <person name="Martinka S."/>
            <person name="Mead K."/>
            <person name="McLellan M.D."/>
            <person name="Meyer R."/>
            <person name="Randall-Maher J."/>
            <person name="Tomlinson C."/>
            <person name="Dauphin-Kohlberg S."/>
            <person name="Kozlowicz-Reilly A."/>
            <person name="Shah N."/>
            <person name="Swearengen-Shahid S."/>
            <person name="Snider J."/>
            <person name="Strong J.T."/>
            <person name="Thompson J."/>
            <person name="Yoakum M."/>
            <person name="Leonard S."/>
            <person name="Pearman C."/>
            <person name="Trani L."/>
            <person name="Radionenko M."/>
            <person name="Waligorski J.E."/>
            <person name="Wang C."/>
            <person name="Rock S.M."/>
            <person name="Tin-Wollam A.-M."/>
            <person name="Maupin R."/>
            <person name="Latreille P."/>
            <person name="Wendl M.C."/>
            <person name="Yang S.-P."/>
            <person name="Pohl C."/>
            <person name="Wallis J.W."/>
            <person name="Spieth J."/>
            <person name="Bieri T.A."/>
            <person name="Berkowicz N."/>
            <person name="Nelson J.O."/>
            <person name="Osborne J."/>
            <person name="Ding L."/>
            <person name="Meyer R."/>
            <person name="Sabo A."/>
            <person name="Shotland Y."/>
            <person name="Sinha P."/>
            <person name="Wohldmann P.E."/>
            <person name="Cook L.L."/>
            <person name="Hickenbotham M.T."/>
            <person name="Eldred J."/>
            <person name="Williams D."/>
            <person name="Jones T.A."/>
            <person name="She X."/>
            <person name="Ciccarelli F.D."/>
            <person name="Izaurralde E."/>
            <person name="Taylor J."/>
            <person name="Schmutz J."/>
            <person name="Myers R.M."/>
            <person name="Cox D.R."/>
            <person name="Huang X."/>
            <person name="McPherson J.D."/>
            <person name="Mardis E.R."/>
            <person name="Clifton S.W."/>
            <person name="Warren W.C."/>
            <person name="Chinwalla A.T."/>
            <person name="Eddy S.R."/>
            <person name="Marra M.A."/>
            <person name="Ovcharenko I."/>
            <person name="Furey T.S."/>
            <person name="Miller W."/>
            <person name="Eichler E.E."/>
            <person name="Bork P."/>
            <person name="Suyama M."/>
            <person name="Torrents D."/>
            <person name="Waterston R.H."/>
            <person name="Wilson R.K."/>
        </authorList>
    </citation>
    <scope>NUCLEOTIDE SEQUENCE [LARGE SCALE GENOMIC DNA]</scope>
</reference>
<reference key="4">
    <citation type="journal article" date="1998" name="DNA Res.">
        <title>Prediction of the coding sequences of unidentified human genes. IX. The complete sequences of 100 new cDNA clones from brain which can code for large proteins in vitro.</title>
        <authorList>
            <person name="Nagase T."/>
            <person name="Ishikawa K."/>
            <person name="Miyajima N."/>
            <person name="Tanaka A."/>
            <person name="Kotani H."/>
            <person name="Nomura N."/>
            <person name="Ohara O."/>
        </authorList>
    </citation>
    <scope>NUCLEOTIDE SEQUENCE [LARGE SCALE MRNA] OF 446-914 (ISOFORM 1)</scope>
    <source>
        <tissue>Brain</tissue>
    </source>
</reference>
<reference key="5">
    <citation type="journal article" date="2004" name="Genome Res.">
        <title>The status, quality, and expansion of the NIH full-length cDNA project: the Mammalian Gene Collection (MGC).</title>
        <authorList>
            <consortium name="The MGC Project Team"/>
        </authorList>
    </citation>
    <scope>NUCLEOTIDE SEQUENCE [LARGE SCALE MRNA] OF 798-914 (ISOFORM 1)</scope>
    <scope>VARIANT ASN-863</scope>
    <source>
        <tissue>Skin</tissue>
    </source>
</reference>
<reference key="6">
    <citation type="journal article" date="2006" name="Biochem. Biophys. Res. Commun.">
        <title>The atypical Rho GTPases Miro-1 and Miro-2 have essential roles in mitochondrial trafficking.</title>
        <authorList>
            <person name="Fransson S."/>
            <person name="Ruusala A."/>
            <person name="Aspenstroem P."/>
        </authorList>
    </citation>
    <scope>INTERACTION WITH RHOT1 AND RHOT2</scope>
</reference>
<reference key="7">
    <citation type="journal article" date="2013" name="J. Proteome Res.">
        <title>Toward a comprehensive characterization of a human cancer cell phosphoproteome.</title>
        <authorList>
            <person name="Zhou H."/>
            <person name="Di Palma S."/>
            <person name="Preisinger C."/>
            <person name="Peng M."/>
            <person name="Polat A.N."/>
            <person name="Heck A.J."/>
            <person name="Mohammed S."/>
        </authorList>
    </citation>
    <scope>PHOSPHORYLATION [LARGE SCALE ANALYSIS] AT SER-420</scope>
    <scope>IDENTIFICATION BY MASS SPECTROMETRY [LARGE SCALE ANALYSIS]</scope>
    <source>
        <tissue>Erythroleukemia</tissue>
    </source>
</reference>
<reference key="8">
    <citation type="journal article" date="2014" name="J. Proteomics">
        <title>An enzyme assisted RP-RPLC approach for in-depth analysis of human liver phosphoproteome.</title>
        <authorList>
            <person name="Bian Y."/>
            <person name="Song C."/>
            <person name="Cheng K."/>
            <person name="Dong M."/>
            <person name="Wang F."/>
            <person name="Huang J."/>
            <person name="Sun D."/>
            <person name="Wang L."/>
            <person name="Ye M."/>
            <person name="Zou H."/>
        </authorList>
    </citation>
    <scope>IDENTIFICATION BY MASS SPECTROMETRY [LARGE SCALE ANALYSIS]</scope>
    <source>
        <tissue>Liver</tissue>
    </source>
</reference>
<organism>
    <name type="scientific">Homo sapiens</name>
    <name type="common">Human</name>
    <dbReference type="NCBI Taxonomy" id="9606"/>
    <lineage>
        <taxon>Eukaryota</taxon>
        <taxon>Metazoa</taxon>
        <taxon>Chordata</taxon>
        <taxon>Craniata</taxon>
        <taxon>Vertebrata</taxon>
        <taxon>Euteleostomi</taxon>
        <taxon>Mammalia</taxon>
        <taxon>Eutheria</taxon>
        <taxon>Euarchontoglires</taxon>
        <taxon>Primates</taxon>
        <taxon>Haplorrhini</taxon>
        <taxon>Catarrhini</taxon>
        <taxon>Hominidae</taxon>
        <taxon>Homo</taxon>
    </lineage>
</organism>
<feature type="chain" id="PRO_0000064538" description="Trafficking kinesin-binding protein 2">
    <location>
        <begin position="1"/>
        <end position="914"/>
    </location>
</feature>
<feature type="domain" description="HAP1 N-terminal">
    <location>
        <begin position="48"/>
        <end position="353"/>
    </location>
</feature>
<feature type="region of interest" description="Disordered" evidence="3">
    <location>
        <begin position="1"/>
        <end position="30"/>
    </location>
</feature>
<feature type="region of interest" description="Interaction with HGS" evidence="1">
    <location>
        <begin position="359"/>
        <end position="509"/>
    </location>
</feature>
<feature type="region of interest" description="Disordered" evidence="3">
    <location>
        <begin position="447"/>
        <end position="482"/>
    </location>
</feature>
<feature type="region of interest" description="Disordered" evidence="3">
    <location>
        <begin position="765"/>
        <end position="787"/>
    </location>
</feature>
<feature type="coiled-coil region" evidence="2">
    <location>
        <begin position="134"/>
        <end position="354"/>
    </location>
</feature>
<feature type="compositionally biased region" description="Polar residues" evidence="3">
    <location>
        <begin position="1"/>
        <end position="21"/>
    </location>
</feature>
<feature type="compositionally biased region" description="Polar residues" evidence="3">
    <location>
        <begin position="454"/>
        <end position="471"/>
    </location>
</feature>
<feature type="compositionally biased region" description="Pro residues" evidence="3">
    <location>
        <begin position="775"/>
        <end position="787"/>
    </location>
</feature>
<feature type="modified residue" description="Phosphoserine" evidence="10">
    <location>
        <position position="420"/>
    </location>
</feature>
<feature type="splice variant" id="VSP_053418" description="In isoform 2." evidence="8">
    <original>HVIEKEELKLH</original>
    <variation>VGLFIHSTDIC</variation>
    <location>
        <begin position="301"/>
        <end position="311"/>
    </location>
</feature>
<feature type="splice variant" id="VSP_053419" description="In isoform 2." evidence="8">
    <location>
        <begin position="312"/>
        <end position="914"/>
    </location>
</feature>
<feature type="sequence variant" id="VAR_014201" description="In dbSNP:rs13022344." evidence="4 5">
    <original>V</original>
    <variation>I</variation>
    <location>
        <position position="142"/>
    </location>
</feature>
<feature type="sequence variant" id="VAR_014434" description="In dbSNP:rs2244438." evidence="4">
    <original>T</original>
    <variation>I</variation>
    <location>
        <position position="528"/>
    </location>
</feature>
<feature type="sequence variant" id="VAR_051458" description="In dbSNP:rs34594680." evidence="6">
    <original>I</original>
    <variation>N</variation>
    <location>
        <position position="863"/>
    </location>
</feature>
<protein>
    <recommendedName>
        <fullName>Trafficking kinesin-binding protein 2</fullName>
    </recommendedName>
    <alternativeName>
        <fullName>Amyotrophic lateral sclerosis 2 chromosomal region candidate gene 3 protein</fullName>
    </alternativeName>
</protein>
<sequence length="914" mass="101419">MSQSQNAIFTSPTGEENLMNSNHRDSESITDVCSNEDLPEVELVSLLEEQLPQYRLKVDTLFLYENQDWTQSPHQRQHASDALSPVLAEETFRYMILGTDRVEQMTKTYNDIDMVTHLLAERDRDLELAARIGQALLKRNHVLSEQNESLEEQLGQAFDQVNQLQHELCKKDELLRIVSIASEESETDSSCSTPLRFNESFSLSQGLLQLEMLQEKLKELEEENMALRSKACHIKTETVTYEEKEQQLVSDCVKELRETNAQMSRMTEELSGKSDELIRYQEELSSLLSQIVDLQHKLKEHVIEKEELKLHLQASKDAQRQLTMELHELQDRNMECLGMLHESQEEIKELRSRSGPTAHLYFSQSYGAFTGESLAAEIEGTMRKKLSLDEESSLFKQKAQQKRVFDTVRIANDTRGRSISFPALLPIPGSNRSSVIMTAKPFESGLQQTEDKSLLNQGSSSEEVAGSSQKMGQPGPSGDSDLATALHRLSLRRQNYLSEKQFFAEEWQRKIQVLADQKEGVSGCVTPTESLASLCTTQSEITDLSSASCLRGFMPEKLQIVKPLEGSQTLYHWQQLAQPNLGTILDPRPGVITKGFTQLPGDAIYHISDLEEDEEEGITFQVQQPLEVEEKLSTSKPVTGIFLPPITSAGGPVTVATANPGKCLSCTNSTFTFTTCRILHPSDITQVTPSSGFPSLSCGSSGSSSSNTAVNSPALSYRLSIGESITNRRDSTTTFSSTMSLAKLLQERGISAKVYHSPISENPLQPLPKSLAIPSTPPNSPSHSPCPSPLPFEPRVHLSENFLASRPAETFLQEMYGLRPSRNPPDVGQLKMNLVDRLKRLGIARVVKNPGAQENGRCQEAEIGPQKPDSAVYLNSGSSLLGGLRRNQSLPVIMGSFAAPVCTSSPKMGVLKED</sequence>
<evidence type="ECO:0000250" key="1"/>
<evidence type="ECO:0000255" key="2"/>
<evidence type="ECO:0000256" key="3">
    <source>
        <dbReference type="SAM" id="MobiDB-lite"/>
    </source>
</evidence>
<evidence type="ECO:0000269" key="4">
    <source>
    </source>
</evidence>
<evidence type="ECO:0000269" key="5">
    <source>
    </source>
</evidence>
<evidence type="ECO:0000269" key="6">
    <source>
    </source>
</evidence>
<evidence type="ECO:0000269" key="7">
    <source>
    </source>
</evidence>
<evidence type="ECO:0000303" key="8">
    <source>
    </source>
</evidence>
<evidence type="ECO:0000305" key="9"/>
<evidence type="ECO:0007744" key="10">
    <source>
    </source>
</evidence>
<accession>O60296</accession>
<accession>E7EV21</accession>
<accession>Q8WVH7</accession>
<accession>Q96NS2</accession>
<accession>Q9C0K5</accession>
<accession>Q9C0K6</accession>
<keyword id="KW-0025">Alternative splicing</keyword>
<keyword id="KW-0175">Coiled coil</keyword>
<keyword id="KW-0963">Cytoplasm</keyword>
<keyword id="KW-0967">Endosome</keyword>
<keyword id="KW-0325">Glycoprotein</keyword>
<keyword id="KW-0496">Mitochondrion</keyword>
<keyword id="KW-0597">Phosphoprotein</keyword>
<keyword id="KW-1267">Proteomics identification</keyword>
<keyword id="KW-1185">Reference proteome</keyword>
<keyword id="KW-0813">Transport</keyword>
<comment type="function">
    <text evidence="1">May regulate endosome-to-lysosome trafficking of membrane cargo, including EGFR.</text>
</comment>
<comment type="subunit">
    <text evidence="1 7">Interacts with GABA-A receptor and O-GlcNAc transferase. Interacts with HGS (By similarity). Interacts with RHOT1/Miro-1 and RHOT2/Miro-2.</text>
</comment>
<comment type="subcellular location">
    <subcellularLocation>
        <location evidence="1">Cytoplasm</location>
    </subcellularLocation>
    <subcellularLocation>
        <location evidence="1">Early endosome</location>
    </subcellularLocation>
    <subcellularLocation>
        <location evidence="1">Mitochondrion</location>
    </subcellularLocation>
    <text evidence="1">Colocalizes with MGARP at the mitochondria. Translocates from the cytoplasm to the mitochondria in a MGARP-dependent manner (By similarity).</text>
</comment>
<comment type="alternative products">
    <event type="alternative splicing"/>
    <isoform>
        <id>O60296-1</id>
        <name>1</name>
        <sequence type="displayed"/>
    </isoform>
    <isoform>
        <id>O60296-2</id>
        <name>2</name>
        <sequence type="described" ref="VSP_053418 VSP_053419"/>
    </isoform>
</comment>
<comment type="tissue specificity">
    <text>Widely expressed, with highest expression in heart.</text>
</comment>
<comment type="PTM">
    <text evidence="1">O-glycosylated.</text>
</comment>
<comment type="similarity">
    <text evidence="9">Belongs to the milton family.</text>
</comment>
<name>TRAK2_HUMAN</name>
<proteinExistence type="evidence at protein level"/>
<gene>
    <name type="primary">TRAK2</name>
    <name type="synonym">ALS2CR3</name>
    <name type="synonym">KIAA0549</name>
</gene>
<dbReference type="EMBL" id="AB038964">
    <property type="protein sequence ID" value="BAB32550.1"/>
    <property type="molecule type" value="Genomic_DNA"/>
</dbReference>
<dbReference type="EMBL" id="AB038951">
    <property type="protein sequence ID" value="BAB32501.1"/>
    <property type="molecule type" value="mRNA"/>
</dbReference>
<dbReference type="EMBL" id="AK054763">
    <property type="protein sequence ID" value="BAB70803.1"/>
    <property type="molecule type" value="mRNA"/>
</dbReference>
<dbReference type="EMBL" id="AC007256">
    <property type="status" value="NOT_ANNOTATED_CDS"/>
    <property type="molecule type" value="Genomic_DNA"/>
</dbReference>
<dbReference type="EMBL" id="AC007282">
    <property type="status" value="NOT_ANNOTATED_CDS"/>
    <property type="molecule type" value="Genomic_DNA"/>
</dbReference>
<dbReference type="EMBL" id="AC080069">
    <property type="status" value="NOT_ANNOTATED_CDS"/>
    <property type="molecule type" value="Genomic_DNA"/>
</dbReference>
<dbReference type="EMBL" id="AB011121">
    <property type="protein sequence ID" value="BAA25475.1"/>
    <property type="molecule type" value="mRNA"/>
</dbReference>
<dbReference type="EMBL" id="BC017999">
    <property type="protein sequence ID" value="AAH17999.1"/>
    <property type="molecule type" value="mRNA"/>
</dbReference>
<dbReference type="CCDS" id="CCDS2347.1">
    <molecule id="O60296-1"/>
</dbReference>
<dbReference type="RefSeq" id="NP_055864.2">
    <molecule id="O60296-1"/>
    <property type="nucleotide sequence ID" value="NM_015049.3"/>
</dbReference>
<dbReference type="RefSeq" id="XP_011509992.1">
    <property type="nucleotide sequence ID" value="XM_011511690.1"/>
</dbReference>
<dbReference type="RefSeq" id="XP_047301534.1">
    <molecule id="O60296-1"/>
    <property type="nucleotide sequence ID" value="XM_047445578.1"/>
</dbReference>
<dbReference type="SMR" id="O60296"/>
<dbReference type="BioGRID" id="122452">
    <property type="interactions" value="66"/>
</dbReference>
<dbReference type="FunCoup" id="O60296">
    <property type="interactions" value="2256"/>
</dbReference>
<dbReference type="IntAct" id="O60296">
    <property type="interactions" value="50"/>
</dbReference>
<dbReference type="MINT" id="O60296"/>
<dbReference type="STRING" id="9606.ENSP00000328875"/>
<dbReference type="GlyGen" id="O60296">
    <property type="glycosylation" value="6 sites, 1 O-linked glycan (6 sites)"/>
</dbReference>
<dbReference type="iPTMnet" id="O60296"/>
<dbReference type="PhosphoSitePlus" id="O60296"/>
<dbReference type="BioMuta" id="TRAK2"/>
<dbReference type="jPOST" id="O60296"/>
<dbReference type="MassIVE" id="O60296"/>
<dbReference type="PaxDb" id="9606-ENSP00000328875"/>
<dbReference type="PeptideAtlas" id="O60296"/>
<dbReference type="ProteomicsDB" id="18553"/>
<dbReference type="ProteomicsDB" id="49328">
    <molecule id="O60296-1"/>
</dbReference>
<dbReference type="ABCD" id="O60296">
    <property type="antibodies" value="1 sequenced antibody"/>
</dbReference>
<dbReference type="Antibodypedia" id="19936">
    <property type="antibodies" value="257 antibodies from 32 providers"/>
</dbReference>
<dbReference type="DNASU" id="66008"/>
<dbReference type="Ensembl" id="ENST00000332624.8">
    <molecule id="O60296-1"/>
    <property type="protein sequence ID" value="ENSP00000328875.3"/>
    <property type="gene ID" value="ENSG00000115993.13"/>
</dbReference>
<dbReference type="Ensembl" id="ENST00000430254.1">
    <molecule id="O60296-2"/>
    <property type="protein sequence ID" value="ENSP00000409333.1"/>
    <property type="gene ID" value="ENSG00000115993.13"/>
</dbReference>
<dbReference type="GeneID" id="66008"/>
<dbReference type="KEGG" id="hsa:66008"/>
<dbReference type="MANE-Select" id="ENST00000332624.8">
    <property type="protein sequence ID" value="ENSP00000328875.3"/>
    <property type="RefSeq nucleotide sequence ID" value="NM_015049.3"/>
    <property type="RefSeq protein sequence ID" value="NP_055864.2"/>
</dbReference>
<dbReference type="UCSC" id="uc002uyb.5">
    <molecule id="O60296-1"/>
    <property type="organism name" value="human"/>
</dbReference>
<dbReference type="AGR" id="HGNC:13206"/>
<dbReference type="CTD" id="66008"/>
<dbReference type="DisGeNET" id="66008"/>
<dbReference type="GeneCards" id="TRAK2"/>
<dbReference type="HGNC" id="HGNC:13206">
    <property type="gene designation" value="TRAK2"/>
</dbReference>
<dbReference type="HPA" id="ENSG00000115993">
    <property type="expression patterns" value="Tissue enhanced (brain)"/>
</dbReference>
<dbReference type="MIM" id="607334">
    <property type="type" value="gene"/>
</dbReference>
<dbReference type="neXtProt" id="NX_O60296"/>
<dbReference type="OpenTargets" id="ENSG00000115993"/>
<dbReference type="PharmGKB" id="PA24744"/>
<dbReference type="VEuPathDB" id="HostDB:ENSG00000115993"/>
<dbReference type="eggNOG" id="KOG4360">
    <property type="taxonomic scope" value="Eukaryota"/>
</dbReference>
<dbReference type="GeneTree" id="ENSGT00940000158202"/>
<dbReference type="HOGENOM" id="CLU_013450_0_1_1"/>
<dbReference type="InParanoid" id="O60296"/>
<dbReference type="OMA" id="SFRYMTL"/>
<dbReference type="OrthoDB" id="10067624at2759"/>
<dbReference type="PAN-GO" id="O60296">
    <property type="GO annotations" value="10 GO annotations based on evolutionary models"/>
</dbReference>
<dbReference type="PhylomeDB" id="O60296"/>
<dbReference type="TreeFam" id="TF323495"/>
<dbReference type="PathwayCommons" id="O60296"/>
<dbReference type="Reactome" id="R-HSA-9013419">
    <property type="pathway name" value="RHOT2 GTPase cycle"/>
</dbReference>
<dbReference type="Reactome" id="R-HSA-9013425">
    <property type="pathway name" value="RHOT1 GTPase cycle"/>
</dbReference>
<dbReference type="SignaLink" id="O60296"/>
<dbReference type="SIGNOR" id="O60296"/>
<dbReference type="BioGRID-ORCS" id="66008">
    <property type="hits" value="4 hits in 1156 CRISPR screens"/>
</dbReference>
<dbReference type="ChiTaRS" id="TRAK2">
    <property type="organism name" value="human"/>
</dbReference>
<dbReference type="GeneWiki" id="TRAK2"/>
<dbReference type="GenomeRNAi" id="66008"/>
<dbReference type="Pharos" id="O60296">
    <property type="development level" value="Tbio"/>
</dbReference>
<dbReference type="PRO" id="PR:O60296"/>
<dbReference type="Proteomes" id="UP000005640">
    <property type="component" value="Chromosome 2"/>
</dbReference>
<dbReference type="RNAct" id="O60296">
    <property type="molecule type" value="protein"/>
</dbReference>
<dbReference type="Bgee" id="ENSG00000115993">
    <property type="expression patterns" value="Expressed in dorsal motor nucleus of vagus nerve and 214 other cell types or tissues"/>
</dbReference>
<dbReference type="ExpressionAtlas" id="O60296">
    <property type="expression patterns" value="baseline and differential"/>
</dbReference>
<dbReference type="GO" id="GO:0044295">
    <property type="term" value="C:axonal growth cone"/>
    <property type="evidence" value="ECO:0007669"/>
    <property type="project" value="Ensembl"/>
</dbReference>
<dbReference type="GO" id="GO:0005737">
    <property type="term" value="C:cytoplasm"/>
    <property type="evidence" value="ECO:0000250"/>
    <property type="project" value="UniProtKB"/>
</dbReference>
<dbReference type="GO" id="GO:0031410">
    <property type="term" value="C:cytoplasmic vesicle"/>
    <property type="evidence" value="ECO:0000318"/>
    <property type="project" value="GO_Central"/>
</dbReference>
<dbReference type="GO" id="GO:0005829">
    <property type="term" value="C:cytosol"/>
    <property type="evidence" value="ECO:0000304"/>
    <property type="project" value="Reactome"/>
</dbReference>
<dbReference type="GO" id="GO:0030425">
    <property type="term" value="C:dendrite"/>
    <property type="evidence" value="ECO:0000318"/>
    <property type="project" value="GO_Central"/>
</dbReference>
<dbReference type="GO" id="GO:0032839">
    <property type="term" value="C:dendrite cytoplasm"/>
    <property type="evidence" value="ECO:0007669"/>
    <property type="project" value="GOC"/>
</dbReference>
<dbReference type="GO" id="GO:0005769">
    <property type="term" value="C:early endosome"/>
    <property type="evidence" value="ECO:0007669"/>
    <property type="project" value="UniProtKB-SubCell"/>
</dbReference>
<dbReference type="GO" id="GO:0005739">
    <property type="term" value="C:mitochondrion"/>
    <property type="evidence" value="ECO:0000250"/>
    <property type="project" value="UniProtKB"/>
</dbReference>
<dbReference type="GO" id="GO:0043025">
    <property type="term" value="C:neuronal cell body"/>
    <property type="evidence" value="ECO:0007669"/>
    <property type="project" value="Ensembl"/>
</dbReference>
<dbReference type="GO" id="GO:0005634">
    <property type="term" value="C:nucleus"/>
    <property type="evidence" value="ECO:0007669"/>
    <property type="project" value="Ensembl"/>
</dbReference>
<dbReference type="GO" id="GO:0005886">
    <property type="term" value="C:plasma membrane"/>
    <property type="evidence" value="ECO:0000250"/>
    <property type="project" value="UniProtKB"/>
</dbReference>
<dbReference type="GO" id="GO:0019899">
    <property type="term" value="F:enzyme binding"/>
    <property type="evidence" value="ECO:0007669"/>
    <property type="project" value="Ensembl"/>
</dbReference>
<dbReference type="GO" id="GO:0050811">
    <property type="term" value="F:GABA receptor binding"/>
    <property type="evidence" value="ECO:0000318"/>
    <property type="project" value="GO_Central"/>
</dbReference>
<dbReference type="GO" id="GO:0019894">
    <property type="term" value="F:kinesin binding"/>
    <property type="evidence" value="ECO:0007669"/>
    <property type="project" value="Ensembl"/>
</dbReference>
<dbReference type="GO" id="GO:0017022">
    <property type="term" value="F:myosin binding"/>
    <property type="evidence" value="ECO:0000318"/>
    <property type="project" value="GO_Central"/>
</dbReference>
<dbReference type="GO" id="GO:0005102">
    <property type="term" value="F:signaling receptor binding"/>
    <property type="evidence" value="ECO:0000250"/>
    <property type="project" value="UniProtKB"/>
</dbReference>
<dbReference type="GO" id="GO:0030911">
    <property type="term" value="F:TPR domain binding"/>
    <property type="evidence" value="ECO:0007669"/>
    <property type="project" value="Ensembl"/>
</dbReference>
<dbReference type="GO" id="GO:0048813">
    <property type="term" value="P:dendrite morphogenesis"/>
    <property type="evidence" value="ECO:0007669"/>
    <property type="project" value="Ensembl"/>
</dbReference>
<dbReference type="GO" id="GO:0098939">
    <property type="term" value="P:dendritic transport of mitochondrion"/>
    <property type="evidence" value="ECO:0007669"/>
    <property type="project" value="Ensembl"/>
</dbReference>
<dbReference type="GO" id="GO:0008333">
    <property type="term" value="P:endosome to lysosome transport"/>
    <property type="evidence" value="ECO:0007669"/>
    <property type="project" value="Ensembl"/>
</dbReference>
<dbReference type="GO" id="GO:0048311">
    <property type="term" value="P:mitochondrion distribution"/>
    <property type="evidence" value="ECO:0000318"/>
    <property type="project" value="GO_Central"/>
</dbReference>
<dbReference type="GO" id="GO:0050771">
    <property type="term" value="P:negative regulation of axonogenesis"/>
    <property type="evidence" value="ECO:0007669"/>
    <property type="project" value="Ensembl"/>
</dbReference>
<dbReference type="GO" id="GO:0022008">
    <property type="term" value="P:neurogenesis"/>
    <property type="evidence" value="ECO:0000318"/>
    <property type="project" value="GO_Central"/>
</dbReference>
<dbReference type="GO" id="GO:0006493">
    <property type="term" value="P:protein O-linked glycosylation"/>
    <property type="evidence" value="ECO:0007669"/>
    <property type="project" value="Ensembl"/>
</dbReference>
<dbReference type="GO" id="GO:0006605">
    <property type="term" value="P:protein targeting"/>
    <property type="evidence" value="ECO:0000318"/>
    <property type="project" value="GO_Central"/>
</dbReference>
<dbReference type="GO" id="GO:0006357">
    <property type="term" value="P:regulation of transcription by RNA polymerase II"/>
    <property type="evidence" value="ECO:0007669"/>
    <property type="project" value="Ensembl"/>
</dbReference>
<dbReference type="GO" id="GO:0047496">
    <property type="term" value="P:vesicle transport along microtubule"/>
    <property type="evidence" value="ECO:0000318"/>
    <property type="project" value="GO_Central"/>
</dbReference>
<dbReference type="InterPro" id="IPR006933">
    <property type="entry name" value="HAP1_N"/>
</dbReference>
<dbReference type="InterPro" id="IPR051946">
    <property type="entry name" value="Intracell_Traff-Reg"/>
</dbReference>
<dbReference type="InterPro" id="IPR022154">
    <property type="entry name" value="TRAK1/2_C"/>
</dbReference>
<dbReference type="PANTHER" id="PTHR15751">
    <property type="entry name" value="TRAFFICKING KINESIN-BINDING PROTEIN"/>
    <property type="match status" value="1"/>
</dbReference>
<dbReference type="PANTHER" id="PTHR15751:SF13">
    <property type="entry name" value="TRAFFICKING KINESIN-BINDING PROTEIN 2"/>
    <property type="match status" value="1"/>
</dbReference>
<dbReference type="Pfam" id="PF04849">
    <property type="entry name" value="HAP1_N"/>
    <property type="match status" value="1"/>
</dbReference>
<dbReference type="Pfam" id="PF12448">
    <property type="entry name" value="Milton"/>
    <property type="match status" value="1"/>
</dbReference>
<dbReference type="SMART" id="SM01424">
    <property type="entry name" value="HAP1_N"/>
    <property type="match status" value="1"/>
</dbReference>
<dbReference type="SMART" id="SM01423">
    <property type="entry name" value="Milton"/>
    <property type="match status" value="1"/>
</dbReference>